<comment type="function">
    <text evidence="2">Catalyzes the transfer of a two-carbon ketol group from a ketose donor to an aldose acceptor, via a covalent intermediate with the cofactor thiamine pyrophosphate.</text>
</comment>
<comment type="catalytic activity">
    <reaction evidence="2">
        <text>D-sedoheptulose 7-phosphate + D-glyceraldehyde 3-phosphate = aldehydo-D-ribose 5-phosphate + D-xylulose 5-phosphate</text>
        <dbReference type="Rhea" id="RHEA:10508"/>
        <dbReference type="ChEBI" id="CHEBI:57483"/>
        <dbReference type="ChEBI" id="CHEBI:57737"/>
        <dbReference type="ChEBI" id="CHEBI:58273"/>
        <dbReference type="ChEBI" id="CHEBI:59776"/>
        <dbReference type="EC" id="2.2.1.1"/>
    </reaction>
</comment>
<comment type="cofactor">
    <cofactor evidence="1">
        <name>Mg(2+)</name>
        <dbReference type="ChEBI" id="CHEBI:18420"/>
    </cofactor>
</comment>
<comment type="cofactor">
    <cofactor evidence="1">
        <name>thiamine diphosphate</name>
        <dbReference type="ChEBI" id="CHEBI:58937"/>
    </cofactor>
    <text evidence="1">Binds 1 thiamine pyrophosphate per subunit.</text>
</comment>
<comment type="activity regulation">
    <text evidence="2">Activity is increased sixfold following autotrophic growth on methanol compared with that of heterotrophically grown cells.</text>
</comment>
<comment type="similarity">
    <text evidence="4">Belongs to the transketolase family.</text>
</comment>
<name>TKT2_XANFL</name>
<feature type="chain" id="PRO_0000441913" description="Transketolase 2">
    <location>
        <begin position="1"/>
        <end position="687"/>
    </location>
</feature>
<feature type="active site" description="Proton donor" evidence="1">
    <location>
        <position position="432"/>
    </location>
</feature>
<feature type="binding site" evidence="1">
    <location>
        <position position="47"/>
    </location>
    <ligand>
        <name>substrate</name>
    </ligand>
</feature>
<feature type="binding site" evidence="1">
    <location>
        <position position="87"/>
    </location>
    <ligand>
        <name>thiamine diphosphate</name>
        <dbReference type="ChEBI" id="CHEBI:58937"/>
    </ligand>
</feature>
<feature type="binding site" evidence="1">
    <location>
        <begin position="135"/>
        <end position="137"/>
    </location>
    <ligand>
        <name>thiamine diphosphate</name>
        <dbReference type="ChEBI" id="CHEBI:58937"/>
    </ligand>
</feature>
<feature type="binding site" evidence="1">
    <location>
        <position position="176"/>
    </location>
    <ligand>
        <name>Mg(2+)</name>
        <dbReference type="ChEBI" id="CHEBI:18420"/>
    </ligand>
</feature>
<feature type="binding site" evidence="1">
    <location>
        <position position="177"/>
    </location>
    <ligand>
        <name>thiamine diphosphate</name>
        <dbReference type="ChEBI" id="CHEBI:58937"/>
    </ligand>
</feature>
<feature type="binding site" evidence="1">
    <location>
        <position position="206"/>
    </location>
    <ligand>
        <name>Mg(2+)</name>
        <dbReference type="ChEBI" id="CHEBI:18420"/>
    </ligand>
</feature>
<feature type="binding site" evidence="1">
    <location>
        <position position="206"/>
    </location>
    <ligand>
        <name>thiamine diphosphate</name>
        <dbReference type="ChEBI" id="CHEBI:58937"/>
    </ligand>
</feature>
<feature type="binding site" evidence="1">
    <location>
        <position position="208"/>
    </location>
    <ligand>
        <name>Mg(2+)</name>
        <dbReference type="ChEBI" id="CHEBI:18420"/>
    </ligand>
</feature>
<feature type="binding site" evidence="1">
    <location>
        <position position="282"/>
    </location>
    <ligand>
        <name>substrate</name>
    </ligand>
</feature>
<feature type="binding site" evidence="1">
    <location>
        <position position="282"/>
    </location>
    <ligand>
        <name>thiamine diphosphate</name>
        <dbReference type="ChEBI" id="CHEBI:58937"/>
    </ligand>
</feature>
<feature type="binding site" evidence="1">
    <location>
        <position position="379"/>
    </location>
    <ligand>
        <name>substrate</name>
    </ligand>
</feature>
<feature type="binding site" evidence="1">
    <location>
        <position position="406"/>
    </location>
    <ligand>
        <name>substrate</name>
    </ligand>
</feature>
<feature type="binding site" evidence="1">
    <location>
        <position position="458"/>
    </location>
    <ligand>
        <name>thiamine diphosphate</name>
        <dbReference type="ChEBI" id="CHEBI:58937"/>
    </ligand>
</feature>
<feature type="binding site" evidence="1">
    <location>
        <position position="482"/>
    </location>
    <ligand>
        <name>substrate</name>
    </ligand>
</feature>
<feature type="binding site" evidence="1">
    <location>
        <position position="490"/>
    </location>
    <ligand>
        <name>substrate</name>
    </ligand>
</feature>
<feature type="binding site" evidence="1">
    <location>
        <position position="494"/>
    </location>
    <ligand>
        <name>substrate</name>
    </ligand>
</feature>
<feature type="binding site" evidence="1">
    <location>
        <position position="541"/>
    </location>
    <ligand>
        <name>substrate</name>
    </ligand>
</feature>
<feature type="site" description="Important for catalytic activity" evidence="1">
    <location>
        <position position="47"/>
    </location>
</feature>
<feature type="site" description="Important for catalytic activity" evidence="1">
    <location>
        <position position="282"/>
    </location>
</feature>
<organism>
    <name type="scientific">Xanthobacter flavus</name>
    <dbReference type="NCBI Taxonomy" id="281"/>
    <lineage>
        <taxon>Bacteria</taxon>
        <taxon>Pseudomonadati</taxon>
        <taxon>Pseudomonadota</taxon>
        <taxon>Alphaproteobacteria</taxon>
        <taxon>Hyphomicrobiales</taxon>
        <taxon>Xanthobacteraceae</taxon>
        <taxon>Xanthobacter</taxon>
    </lineage>
</organism>
<sequence length="687" mass="73236">MTAHAAALAAADAPAPVDRSPGALGWPVTAALRALAMDGVEQAKSGHPGAPMGMAEIAAVLWREHLRHNPADPSWPDRDRFVLSNGHGSMLIYALLHLTGYDLPIAELKRFRQLHSRTPGHPELGMTPGVETTTGPLGQGLANAVGMAIAEKTLAAQFNRPGLSIVDHRTFVFLGDGCLMEGVSHEACSLAGRLGLGKLVAFYDDNGISIDGKVEEWFPDDTPARFAAYGWHVIRNVDGHDPAMLRDAVEAALSETGKPTLICCKTTIGRGAPTKEGHQDTHGAPLGAEEIARTRAAMGWDHAPFEVPEDIYALWDARRSGAARQSAWDARMEAYERAYPAEAAEFRRRLKGDLSPAFAATYAAALKATVEKAETVATRKASQLALAALAPAVPEFLGGSADLAHSNLTTFPGAVPITRDPAGNQIFYGVREFGMSAIANGIALHGGFIPFVATFLVFSDYARNAMRMSALMGQRVIYILTHDSIGLGEDGPTHQPVEHVESLRLIPNLDVWRPADTVETLAAWHAALTRTNGPSAFILSRQNLPCWPRDAAQIEGIEAGAYVLRESEGLARAVLVATGSEVKLAAAAADLLDTAGIPTRIVSMPCRERFEALTETERAALFPKGVPVVAVEAGVTRGWRGLSGTRADGIIAIGIDRFGESAPEKDLWPLFGFTPEAVADAVRRAVG</sequence>
<evidence type="ECO:0000250" key="1">
    <source>
        <dbReference type="UniProtKB" id="P27302"/>
    </source>
</evidence>
<evidence type="ECO:0000269" key="2">
    <source>
    </source>
</evidence>
<evidence type="ECO:0000303" key="3">
    <source>
    </source>
</evidence>
<evidence type="ECO:0000305" key="4"/>
<protein>
    <recommendedName>
        <fullName evidence="4">Transketolase 2</fullName>
        <ecNumber evidence="2">2.2.1.1</ecNumber>
    </recommendedName>
</protein>
<accession>Q60103</accession>
<keyword id="KW-0460">Magnesium</keyword>
<keyword id="KW-0479">Metal-binding</keyword>
<keyword id="KW-0786">Thiamine pyrophosphate</keyword>
<keyword id="KW-0808">Transferase</keyword>
<dbReference type="EC" id="2.2.1.1" evidence="2"/>
<dbReference type="EMBL" id="U29134">
    <property type="protein sequence ID" value="AAA96741.1"/>
    <property type="molecule type" value="Genomic_DNA"/>
</dbReference>
<dbReference type="SMR" id="Q60103"/>
<dbReference type="GO" id="GO:0005829">
    <property type="term" value="C:cytosol"/>
    <property type="evidence" value="ECO:0007669"/>
    <property type="project" value="TreeGrafter"/>
</dbReference>
<dbReference type="GO" id="GO:0046872">
    <property type="term" value="F:metal ion binding"/>
    <property type="evidence" value="ECO:0007669"/>
    <property type="project" value="UniProtKB-KW"/>
</dbReference>
<dbReference type="GO" id="GO:0004802">
    <property type="term" value="F:transketolase activity"/>
    <property type="evidence" value="ECO:0007669"/>
    <property type="project" value="UniProtKB-EC"/>
</dbReference>
<dbReference type="GO" id="GO:0006098">
    <property type="term" value="P:pentose-phosphate shunt"/>
    <property type="evidence" value="ECO:0007669"/>
    <property type="project" value="TreeGrafter"/>
</dbReference>
<dbReference type="CDD" id="cd07033">
    <property type="entry name" value="TPP_PYR_DXS_TK_like"/>
    <property type="match status" value="1"/>
</dbReference>
<dbReference type="CDD" id="cd02012">
    <property type="entry name" value="TPP_TK"/>
    <property type="match status" value="1"/>
</dbReference>
<dbReference type="FunFam" id="3.40.50.970:FF:000003">
    <property type="entry name" value="Transketolase"/>
    <property type="match status" value="1"/>
</dbReference>
<dbReference type="FunFam" id="3.40.50.970:FF:000004">
    <property type="entry name" value="Transketolase"/>
    <property type="match status" value="1"/>
</dbReference>
<dbReference type="Gene3D" id="3.40.50.920">
    <property type="match status" value="1"/>
</dbReference>
<dbReference type="Gene3D" id="3.40.50.970">
    <property type="match status" value="2"/>
</dbReference>
<dbReference type="InterPro" id="IPR029061">
    <property type="entry name" value="THDP-binding"/>
</dbReference>
<dbReference type="InterPro" id="IPR009014">
    <property type="entry name" value="Transketo_C/PFOR_II"/>
</dbReference>
<dbReference type="InterPro" id="IPR055152">
    <property type="entry name" value="Transketolase-like_C_2"/>
</dbReference>
<dbReference type="InterPro" id="IPR005475">
    <property type="entry name" value="Transketolase-like_Pyr-bd"/>
</dbReference>
<dbReference type="InterPro" id="IPR005478">
    <property type="entry name" value="Transketolase_bac-like"/>
</dbReference>
<dbReference type="InterPro" id="IPR049557">
    <property type="entry name" value="Transketolase_CS"/>
</dbReference>
<dbReference type="InterPro" id="IPR033247">
    <property type="entry name" value="Transketolase_fam"/>
</dbReference>
<dbReference type="InterPro" id="IPR005474">
    <property type="entry name" value="Transketolase_N"/>
</dbReference>
<dbReference type="NCBIfam" id="TIGR00232">
    <property type="entry name" value="tktlase_bact"/>
    <property type="match status" value="1"/>
</dbReference>
<dbReference type="PANTHER" id="PTHR43522">
    <property type="entry name" value="TRANSKETOLASE"/>
    <property type="match status" value="1"/>
</dbReference>
<dbReference type="PANTHER" id="PTHR43522:SF2">
    <property type="entry name" value="TRANSKETOLASE 1-RELATED"/>
    <property type="match status" value="1"/>
</dbReference>
<dbReference type="Pfam" id="PF02779">
    <property type="entry name" value="Transket_pyr"/>
    <property type="match status" value="1"/>
</dbReference>
<dbReference type="Pfam" id="PF22613">
    <property type="entry name" value="Transketolase_C_1"/>
    <property type="match status" value="1"/>
</dbReference>
<dbReference type="Pfam" id="PF00456">
    <property type="entry name" value="Transketolase_N"/>
    <property type="match status" value="1"/>
</dbReference>
<dbReference type="SMART" id="SM00861">
    <property type="entry name" value="Transket_pyr"/>
    <property type="match status" value="1"/>
</dbReference>
<dbReference type="SUPFAM" id="SSF52518">
    <property type="entry name" value="Thiamin diphosphate-binding fold (THDP-binding)"/>
    <property type="match status" value="2"/>
</dbReference>
<dbReference type="SUPFAM" id="SSF52922">
    <property type="entry name" value="TK C-terminal domain-like"/>
    <property type="match status" value="1"/>
</dbReference>
<dbReference type="PROSITE" id="PS00801">
    <property type="entry name" value="TRANSKETOLASE_1"/>
    <property type="match status" value="1"/>
</dbReference>
<gene>
    <name evidence="3" type="primary">cbbT</name>
</gene>
<proteinExistence type="evidence at protein level"/>
<reference key="1">
    <citation type="journal article" date="1996" name="J. Bacteriol.">
        <title>Primary structure and phylogeny of the Calvin cycle enzymes transketolase and fructosebisphosphate aldolase of Xanthobacter flavus.</title>
        <authorList>
            <person name="van den Bergh E.R."/>
            <person name="Baker S.C."/>
            <person name="Raggers R.J."/>
            <person name="Terpstra P."/>
            <person name="Woudstra E.C."/>
            <person name="Dijkhuizen L."/>
            <person name="Meijer W.G."/>
        </authorList>
    </citation>
    <scope>NUCLEOTIDE SEQUENCE [GENOMIC DNA]</scope>
    <scope>FUNCTION</scope>
    <scope>CATALYTIC ACTIVITY</scope>
    <scope>ACTIVITY REGULATION</scope>
    <source>
        <strain>H4-14</strain>
    </source>
</reference>